<protein>
    <recommendedName>
        <fullName>Tripeptidyl-peptidase SED3</fullName>
        <ecNumber>3.4.14.10</ecNumber>
    </recommendedName>
    <alternativeName>
        <fullName>Sedolisin-C</fullName>
    </alternativeName>
</protein>
<gene>
    <name type="primary">SED3</name>
    <name type="ORF">MCYG_06077</name>
</gene>
<evidence type="ECO:0000250" key="1"/>
<evidence type="ECO:0000255" key="2"/>
<reference key="1">
    <citation type="journal article" date="2012" name="MBio">
        <title>Comparative genome analysis of Trichophyton rubrum and related dermatophytes reveals candidate genes involved in infection.</title>
        <authorList>
            <person name="Martinez D.A."/>
            <person name="Oliver B.G."/>
            <person name="Graeser Y."/>
            <person name="Goldberg J.M."/>
            <person name="Li W."/>
            <person name="Martinez-Rossi N.M."/>
            <person name="Monod M."/>
            <person name="Shelest E."/>
            <person name="Barton R.C."/>
            <person name="Birch E."/>
            <person name="Brakhage A.A."/>
            <person name="Chen Z."/>
            <person name="Gurr S.J."/>
            <person name="Heiman D."/>
            <person name="Heitman J."/>
            <person name="Kosti I."/>
            <person name="Rossi A."/>
            <person name="Saif S."/>
            <person name="Samalova M."/>
            <person name="Saunders C.W."/>
            <person name="Shea T."/>
            <person name="Summerbell R.C."/>
            <person name="Xu J."/>
            <person name="Young S."/>
            <person name="Zeng Q."/>
            <person name="Birren B.W."/>
            <person name="Cuomo C.A."/>
            <person name="White T.C."/>
        </authorList>
    </citation>
    <scope>NUCLEOTIDE SEQUENCE [LARGE SCALE GENOMIC DNA]</scope>
    <source>
        <strain>ATCC MYA-4605 / CBS 113480</strain>
    </source>
</reference>
<sequence length="595" mass="65327">MLLPWQQTIIILFLGVNSLVAALRNTYRTVEELPTIPEGWIQGKPPSPETSIRMNLALFQEKAHAFEQMVVDISTPGHSNYGKHLSRRTLKDFLRPRKEVSDSILSWLEEAGVAKKSILNDGDWIHFAISVSQAERMLKTRFHYYHDSGDPSVFMIRTLQYSVPSHLAPDIHMIQPTTKFGKPKKHGNSIAKLETIQLSSNATTNCNVTITPQCLRDIYKMGNSLATPDYRNVIGVSGYLDQYARYNDFYKFIDLYAPDLKGANFSVKYIGKGQNLQNSTKNSVEASLDIDYALGLSNATTVFYTTSGRGPLVPDLEQPDQEHNSNEPYLDQLHYLLSLPSDELPAILSTSYGENEQSVPEKFSNATCSLFAQLAARGVSVIFSSGDTGVGSSCLTNGRKKVSRFNPTFPASCPFVTSVGATFRINPEMAISFSSGGFSDRHIRPRFQDDAVLTYLDKLGNQWEGLYDPRGRGIPDVAAQGSNFAVYDHGRVGMVSGTSASAPAFAAIIANLNSIRLNANKPVLGYLNPFIYGQGRQGFTDIVHGGSRGCAGYNSTNGSAPAVPYASWNATEGWDPVTGVGTPNFEILAKIVRDL</sequence>
<keyword id="KW-0106">Calcium</keyword>
<keyword id="KW-0325">Glycoprotein</keyword>
<keyword id="KW-0378">Hydrolase</keyword>
<keyword id="KW-0479">Metal-binding</keyword>
<keyword id="KW-0645">Protease</keyword>
<keyword id="KW-1185">Reference proteome</keyword>
<keyword id="KW-0964">Secreted</keyword>
<keyword id="KW-0720">Serine protease</keyword>
<keyword id="KW-0732">Signal</keyword>
<keyword id="KW-0843">Virulence</keyword>
<keyword id="KW-0865">Zymogen</keyword>
<proteinExistence type="inferred from homology"/>
<name>SED3_ARTOC</name>
<organism>
    <name type="scientific">Arthroderma otae (strain ATCC MYA-4605 / CBS 113480)</name>
    <name type="common">Microsporum canis</name>
    <dbReference type="NCBI Taxonomy" id="554155"/>
    <lineage>
        <taxon>Eukaryota</taxon>
        <taxon>Fungi</taxon>
        <taxon>Dikarya</taxon>
        <taxon>Ascomycota</taxon>
        <taxon>Pezizomycotina</taxon>
        <taxon>Eurotiomycetes</taxon>
        <taxon>Eurotiomycetidae</taxon>
        <taxon>Onygenales</taxon>
        <taxon>Arthrodermataceae</taxon>
        <taxon>Microsporum</taxon>
    </lineage>
</organism>
<accession>C5FTQ5</accession>
<comment type="function">
    <text evidence="1">Secreted tripeptidyl-peptidase which degrades proteins at acidic pHs and is involved in virulence.</text>
</comment>
<comment type="catalytic activity">
    <reaction>
        <text>Release of an N-terminal tripeptide from a polypeptide.</text>
        <dbReference type="EC" id="3.4.14.10"/>
    </reaction>
</comment>
<comment type="cofactor">
    <cofactor evidence="1">
        <name>Ca(2+)</name>
        <dbReference type="ChEBI" id="CHEBI:29108"/>
    </cofactor>
    <text evidence="1">Binds 1 Ca(2+) ion per subunit.</text>
</comment>
<comment type="subcellular location">
    <subcellularLocation>
        <location evidence="1">Secreted</location>
        <location evidence="1">Extracellular space</location>
    </subcellularLocation>
</comment>
<feature type="signal peptide" evidence="2">
    <location>
        <begin position="1"/>
        <end position="22"/>
    </location>
</feature>
<feature type="propeptide" id="PRO_0000390748" description="Removed in mature form" evidence="1">
    <location>
        <begin position="23"/>
        <end position="201"/>
    </location>
</feature>
<feature type="chain" id="PRO_0000390749" description="Tripeptidyl-peptidase SED3">
    <location>
        <begin position="202"/>
        <end position="595"/>
    </location>
</feature>
<feature type="domain" description="Peptidase S53">
    <location>
        <begin position="209"/>
        <end position="595"/>
    </location>
</feature>
<feature type="active site" description="Charge relay system" evidence="1">
    <location>
        <position position="285"/>
    </location>
</feature>
<feature type="active site" description="Charge relay system" evidence="1">
    <location>
        <position position="289"/>
    </location>
</feature>
<feature type="active site" description="Charge relay system" evidence="1">
    <location>
        <position position="499"/>
    </location>
</feature>
<feature type="binding site" evidence="1">
    <location>
        <position position="541"/>
    </location>
    <ligand>
        <name>Ca(2+)</name>
        <dbReference type="ChEBI" id="CHEBI:29108"/>
    </ligand>
</feature>
<feature type="binding site" evidence="1">
    <location>
        <position position="542"/>
    </location>
    <ligand>
        <name>Ca(2+)</name>
        <dbReference type="ChEBI" id="CHEBI:29108"/>
    </ligand>
</feature>
<feature type="binding site" evidence="1">
    <location>
        <position position="573"/>
    </location>
    <ligand>
        <name>Ca(2+)</name>
        <dbReference type="ChEBI" id="CHEBI:29108"/>
    </ligand>
</feature>
<feature type="binding site" evidence="1">
    <location>
        <position position="575"/>
    </location>
    <ligand>
        <name>Ca(2+)</name>
        <dbReference type="ChEBI" id="CHEBI:29108"/>
    </ligand>
</feature>
<feature type="glycosylation site" description="N-linked (GlcNAc...) asparagine" evidence="2">
    <location>
        <position position="207"/>
    </location>
</feature>
<feature type="glycosylation site" description="N-linked (GlcNAc...) asparagine" evidence="2">
    <location>
        <position position="264"/>
    </location>
</feature>
<feature type="glycosylation site" description="N-linked (GlcNAc...) asparagine" evidence="2">
    <location>
        <position position="278"/>
    </location>
</feature>
<feature type="glycosylation site" description="N-linked (GlcNAc...) asparagine" evidence="2">
    <location>
        <position position="298"/>
    </location>
</feature>
<feature type="glycosylation site" description="N-linked (GlcNAc...) asparagine" evidence="2">
    <location>
        <position position="365"/>
    </location>
</feature>
<feature type="glycosylation site" description="N-linked (GlcNAc...) asparagine" evidence="2">
    <location>
        <position position="554"/>
    </location>
</feature>
<feature type="glycosylation site" description="N-linked (GlcNAc...) asparagine" evidence="2">
    <location>
        <position position="557"/>
    </location>
</feature>
<feature type="glycosylation site" description="N-linked (GlcNAc...) asparagine" evidence="2">
    <location>
        <position position="569"/>
    </location>
</feature>
<dbReference type="EC" id="3.4.14.10"/>
<dbReference type="EMBL" id="DS995705">
    <property type="protein sequence ID" value="EEQ33258.1"/>
    <property type="molecule type" value="Genomic_DNA"/>
</dbReference>
<dbReference type="RefSeq" id="XP_002846208.1">
    <property type="nucleotide sequence ID" value="XM_002846162.1"/>
</dbReference>
<dbReference type="SMR" id="C5FTQ5"/>
<dbReference type="STRING" id="554155.C5FTQ5"/>
<dbReference type="MEROPS" id="S53.010"/>
<dbReference type="GlyCosmos" id="C5FTQ5">
    <property type="glycosylation" value="8 sites, No reported glycans"/>
</dbReference>
<dbReference type="GeneID" id="9228377"/>
<dbReference type="VEuPathDB" id="FungiDB:MCYG_06077"/>
<dbReference type="eggNOG" id="ENOG502QR6D">
    <property type="taxonomic scope" value="Eukaryota"/>
</dbReference>
<dbReference type="HOGENOM" id="CLU_013783_3_0_1"/>
<dbReference type="OMA" id="HSRPRYQ"/>
<dbReference type="OrthoDB" id="409122at2759"/>
<dbReference type="Proteomes" id="UP000002035">
    <property type="component" value="Unassembled WGS sequence"/>
</dbReference>
<dbReference type="GO" id="GO:0005576">
    <property type="term" value="C:extracellular region"/>
    <property type="evidence" value="ECO:0007669"/>
    <property type="project" value="UniProtKB-SubCell"/>
</dbReference>
<dbReference type="GO" id="GO:0046872">
    <property type="term" value="F:metal ion binding"/>
    <property type="evidence" value="ECO:0007669"/>
    <property type="project" value="UniProtKB-KW"/>
</dbReference>
<dbReference type="GO" id="GO:0004252">
    <property type="term" value="F:serine-type endopeptidase activity"/>
    <property type="evidence" value="ECO:0007669"/>
    <property type="project" value="InterPro"/>
</dbReference>
<dbReference type="GO" id="GO:0008240">
    <property type="term" value="F:tripeptidyl-peptidase activity"/>
    <property type="evidence" value="ECO:0007669"/>
    <property type="project" value="UniProtKB-EC"/>
</dbReference>
<dbReference type="GO" id="GO:0006508">
    <property type="term" value="P:proteolysis"/>
    <property type="evidence" value="ECO:0007669"/>
    <property type="project" value="UniProtKB-KW"/>
</dbReference>
<dbReference type="CDD" id="cd04056">
    <property type="entry name" value="Peptidases_S53"/>
    <property type="match status" value="1"/>
</dbReference>
<dbReference type="CDD" id="cd11377">
    <property type="entry name" value="Pro-peptidase_S53"/>
    <property type="match status" value="1"/>
</dbReference>
<dbReference type="FunFam" id="3.40.50.200:FF:000015">
    <property type="entry name" value="Tripeptidyl peptidase A"/>
    <property type="match status" value="1"/>
</dbReference>
<dbReference type="Gene3D" id="3.40.50.200">
    <property type="entry name" value="Peptidase S8/S53 domain"/>
    <property type="match status" value="1"/>
</dbReference>
<dbReference type="InterPro" id="IPR000209">
    <property type="entry name" value="Peptidase_S8/S53_dom"/>
</dbReference>
<dbReference type="InterPro" id="IPR036852">
    <property type="entry name" value="Peptidase_S8/S53_dom_sf"/>
</dbReference>
<dbReference type="InterPro" id="IPR023828">
    <property type="entry name" value="Peptidase_S8_Ser-AS"/>
</dbReference>
<dbReference type="InterPro" id="IPR015366">
    <property type="entry name" value="S53_propep"/>
</dbReference>
<dbReference type="InterPro" id="IPR030400">
    <property type="entry name" value="Sedolisin_dom"/>
</dbReference>
<dbReference type="InterPro" id="IPR050819">
    <property type="entry name" value="Tripeptidyl-peptidase_I"/>
</dbReference>
<dbReference type="PANTHER" id="PTHR14218">
    <property type="entry name" value="PROTEASE S8 TRIPEPTIDYL PEPTIDASE I CLN2"/>
    <property type="match status" value="1"/>
</dbReference>
<dbReference type="PANTHER" id="PTHR14218:SF32">
    <property type="entry name" value="TRIPEPTIDYL PEPTIDASE SED3 (AFU_ORTHOLOGUE AFUA_3G08930)"/>
    <property type="match status" value="1"/>
</dbReference>
<dbReference type="Pfam" id="PF00082">
    <property type="entry name" value="Peptidase_S8"/>
    <property type="match status" value="1"/>
</dbReference>
<dbReference type="Pfam" id="PF09286">
    <property type="entry name" value="Pro-kuma_activ"/>
    <property type="match status" value="1"/>
</dbReference>
<dbReference type="SMART" id="SM00944">
    <property type="entry name" value="Pro-kuma_activ"/>
    <property type="match status" value="1"/>
</dbReference>
<dbReference type="SUPFAM" id="SSF54897">
    <property type="entry name" value="Protease propeptides/inhibitors"/>
    <property type="match status" value="1"/>
</dbReference>
<dbReference type="SUPFAM" id="SSF52743">
    <property type="entry name" value="Subtilisin-like"/>
    <property type="match status" value="1"/>
</dbReference>
<dbReference type="PROSITE" id="PS51695">
    <property type="entry name" value="SEDOLISIN"/>
    <property type="match status" value="1"/>
</dbReference>